<name>LFTR_ECO8A</name>
<comment type="function">
    <text evidence="1">Functions in the N-end rule pathway of protein degradation where it conjugates Leu, Phe and, less efficiently, Met from aminoacyl-tRNAs to the N-termini of proteins containing an N-terminal arginine or lysine.</text>
</comment>
<comment type="catalytic activity">
    <reaction evidence="1">
        <text>N-terminal L-lysyl-[protein] + L-leucyl-tRNA(Leu) = N-terminal L-leucyl-L-lysyl-[protein] + tRNA(Leu) + H(+)</text>
        <dbReference type="Rhea" id="RHEA:12340"/>
        <dbReference type="Rhea" id="RHEA-COMP:9613"/>
        <dbReference type="Rhea" id="RHEA-COMP:9622"/>
        <dbReference type="Rhea" id="RHEA-COMP:12670"/>
        <dbReference type="Rhea" id="RHEA-COMP:12671"/>
        <dbReference type="ChEBI" id="CHEBI:15378"/>
        <dbReference type="ChEBI" id="CHEBI:65249"/>
        <dbReference type="ChEBI" id="CHEBI:78442"/>
        <dbReference type="ChEBI" id="CHEBI:78494"/>
        <dbReference type="ChEBI" id="CHEBI:133043"/>
        <dbReference type="EC" id="2.3.2.6"/>
    </reaction>
</comment>
<comment type="catalytic activity">
    <reaction evidence="1">
        <text>N-terminal L-arginyl-[protein] + L-leucyl-tRNA(Leu) = N-terminal L-leucyl-L-arginyl-[protein] + tRNA(Leu) + H(+)</text>
        <dbReference type="Rhea" id="RHEA:50416"/>
        <dbReference type="Rhea" id="RHEA-COMP:9613"/>
        <dbReference type="Rhea" id="RHEA-COMP:9622"/>
        <dbReference type="Rhea" id="RHEA-COMP:12672"/>
        <dbReference type="Rhea" id="RHEA-COMP:12673"/>
        <dbReference type="ChEBI" id="CHEBI:15378"/>
        <dbReference type="ChEBI" id="CHEBI:64719"/>
        <dbReference type="ChEBI" id="CHEBI:78442"/>
        <dbReference type="ChEBI" id="CHEBI:78494"/>
        <dbReference type="ChEBI" id="CHEBI:133044"/>
        <dbReference type="EC" id="2.3.2.6"/>
    </reaction>
</comment>
<comment type="catalytic activity">
    <reaction evidence="1">
        <text>L-phenylalanyl-tRNA(Phe) + an N-terminal L-alpha-aminoacyl-[protein] = an N-terminal L-phenylalanyl-L-alpha-aminoacyl-[protein] + tRNA(Phe)</text>
        <dbReference type="Rhea" id="RHEA:43632"/>
        <dbReference type="Rhea" id="RHEA-COMP:9668"/>
        <dbReference type="Rhea" id="RHEA-COMP:9699"/>
        <dbReference type="Rhea" id="RHEA-COMP:10636"/>
        <dbReference type="Rhea" id="RHEA-COMP:10637"/>
        <dbReference type="ChEBI" id="CHEBI:78442"/>
        <dbReference type="ChEBI" id="CHEBI:78531"/>
        <dbReference type="ChEBI" id="CHEBI:78597"/>
        <dbReference type="ChEBI" id="CHEBI:83561"/>
        <dbReference type="EC" id="2.3.2.6"/>
    </reaction>
</comment>
<comment type="subcellular location">
    <subcellularLocation>
        <location evidence="1">Cytoplasm</location>
    </subcellularLocation>
</comment>
<comment type="similarity">
    <text evidence="1">Belongs to the L/F-transferase family.</text>
</comment>
<evidence type="ECO:0000255" key="1">
    <source>
        <dbReference type="HAMAP-Rule" id="MF_00688"/>
    </source>
</evidence>
<sequence length="234" mass="26619">MRLVQLSRHSIAFPSPEGALREPNGLLALGGDLSPARLLMAYQRGIFPWFSPGDPILWWSPDPRAVLWPESLHISRSMKRFHKRSPYRVTMNYAFGQVIEGCASDREEGTWITRGVVEAYHRLHELGHAHSIEVWREDELVGGMYGVAQGTLFCGESMFSRMENASKTALLVFCEEFIGHGGKLIDCQVLNDHTASLGACEIPRRDYLNYLNQMRLGRLPNNFWVPRCLFSPQE</sequence>
<proteinExistence type="inferred from homology"/>
<feature type="chain" id="PRO_1000131921" description="Leucyl/phenylalanyl-tRNA--protein transferase">
    <location>
        <begin position="1"/>
        <end position="234"/>
    </location>
</feature>
<protein>
    <recommendedName>
        <fullName evidence="1">Leucyl/phenylalanyl-tRNA--protein transferase</fullName>
        <ecNumber evidence="1">2.3.2.6</ecNumber>
    </recommendedName>
    <alternativeName>
        <fullName evidence="1">L/F-transferase</fullName>
    </alternativeName>
    <alternativeName>
        <fullName evidence="1">Leucyltransferase</fullName>
    </alternativeName>
    <alternativeName>
        <fullName evidence="1">Phenyalanyltransferase</fullName>
    </alternativeName>
</protein>
<dbReference type="EC" id="2.3.2.6" evidence="1"/>
<dbReference type="EMBL" id="CU928160">
    <property type="protein sequence ID" value="CAQ97789.1"/>
    <property type="molecule type" value="Genomic_DNA"/>
</dbReference>
<dbReference type="RefSeq" id="WP_001241678.1">
    <property type="nucleotide sequence ID" value="NC_011741.1"/>
</dbReference>
<dbReference type="SMR" id="B7M813"/>
<dbReference type="GeneID" id="75206174"/>
<dbReference type="KEGG" id="ecr:ECIAI1_0925"/>
<dbReference type="HOGENOM" id="CLU_075045_0_0_6"/>
<dbReference type="GO" id="GO:0005737">
    <property type="term" value="C:cytoplasm"/>
    <property type="evidence" value="ECO:0007669"/>
    <property type="project" value="UniProtKB-SubCell"/>
</dbReference>
<dbReference type="GO" id="GO:0008914">
    <property type="term" value="F:leucyl-tRNA--protein transferase activity"/>
    <property type="evidence" value="ECO:0007669"/>
    <property type="project" value="UniProtKB-UniRule"/>
</dbReference>
<dbReference type="GO" id="GO:0030163">
    <property type="term" value="P:protein catabolic process"/>
    <property type="evidence" value="ECO:0007669"/>
    <property type="project" value="UniProtKB-UniRule"/>
</dbReference>
<dbReference type="FunFam" id="3.30.70.3550:FF:000001">
    <property type="entry name" value="Leucyl/phenylalanyl-tRNA--protein transferase"/>
    <property type="match status" value="1"/>
</dbReference>
<dbReference type="FunFam" id="3.40.630.70:FF:000001">
    <property type="entry name" value="Leucyl/phenylalanyl-tRNA--protein transferase"/>
    <property type="match status" value="1"/>
</dbReference>
<dbReference type="Gene3D" id="3.40.630.70">
    <property type="entry name" value="Leucyl/phenylalanyl-tRNA-protein transferase, C-terminal domain"/>
    <property type="match status" value="1"/>
</dbReference>
<dbReference type="Gene3D" id="3.30.70.3550">
    <property type="entry name" value="Leucyl/phenylalanyl-tRNA-protein transferase, N-terminal domain"/>
    <property type="match status" value="1"/>
</dbReference>
<dbReference type="HAMAP" id="MF_00688">
    <property type="entry name" value="Leu_Phe_trans"/>
    <property type="match status" value="1"/>
</dbReference>
<dbReference type="InterPro" id="IPR016181">
    <property type="entry name" value="Acyl_CoA_acyltransferase"/>
</dbReference>
<dbReference type="InterPro" id="IPR004616">
    <property type="entry name" value="Leu/Phe-tRNA_Trfase"/>
</dbReference>
<dbReference type="InterPro" id="IPR042203">
    <property type="entry name" value="Leu/Phe-tRNA_Trfase_C"/>
</dbReference>
<dbReference type="InterPro" id="IPR042221">
    <property type="entry name" value="Leu/Phe-tRNA_Trfase_N"/>
</dbReference>
<dbReference type="NCBIfam" id="TIGR00667">
    <property type="entry name" value="aat"/>
    <property type="match status" value="1"/>
</dbReference>
<dbReference type="PANTHER" id="PTHR30098">
    <property type="entry name" value="LEUCYL/PHENYLALANYL-TRNA--PROTEIN TRANSFERASE"/>
    <property type="match status" value="1"/>
</dbReference>
<dbReference type="PANTHER" id="PTHR30098:SF2">
    <property type="entry name" value="LEUCYL_PHENYLALANYL-TRNA--PROTEIN TRANSFERASE"/>
    <property type="match status" value="1"/>
</dbReference>
<dbReference type="Pfam" id="PF03588">
    <property type="entry name" value="Leu_Phe_trans"/>
    <property type="match status" value="1"/>
</dbReference>
<dbReference type="SUPFAM" id="SSF55729">
    <property type="entry name" value="Acyl-CoA N-acyltransferases (Nat)"/>
    <property type="match status" value="1"/>
</dbReference>
<accession>B7M813</accession>
<keyword id="KW-0012">Acyltransferase</keyword>
<keyword id="KW-0963">Cytoplasm</keyword>
<keyword id="KW-0808">Transferase</keyword>
<reference key="1">
    <citation type="journal article" date="2009" name="PLoS Genet.">
        <title>Organised genome dynamics in the Escherichia coli species results in highly diverse adaptive paths.</title>
        <authorList>
            <person name="Touchon M."/>
            <person name="Hoede C."/>
            <person name="Tenaillon O."/>
            <person name="Barbe V."/>
            <person name="Baeriswyl S."/>
            <person name="Bidet P."/>
            <person name="Bingen E."/>
            <person name="Bonacorsi S."/>
            <person name="Bouchier C."/>
            <person name="Bouvet O."/>
            <person name="Calteau A."/>
            <person name="Chiapello H."/>
            <person name="Clermont O."/>
            <person name="Cruveiller S."/>
            <person name="Danchin A."/>
            <person name="Diard M."/>
            <person name="Dossat C."/>
            <person name="Karoui M.E."/>
            <person name="Frapy E."/>
            <person name="Garry L."/>
            <person name="Ghigo J.M."/>
            <person name="Gilles A.M."/>
            <person name="Johnson J."/>
            <person name="Le Bouguenec C."/>
            <person name="Lescat M."/>
            <person name="Mangenot S."/>
            <person name="Martinez-Jehanne V."/>
            <person name="Matic I."/>
            <person name="Nassif X."/>
            <person name="Oztas S."/>
            <person name="Petit M.A."/>
            <person name="Pichon C."/>
            <person name="Rouy Z."/>
            <person name="Ruf C.S."/>
            <person name="Schneider D."/>
            <person name="Tourret J."/>
            <person name="Vacherie B."/>
            <person name="Vallenet D."/>
            <person name="Medigue C."/>
            <person name="Rocha E.P.C."/>
            <person name="Denamur E."/>
        </authorList>
    </citation>
    <scope>NUCLEOTIDE SEQUENCE [LARGE SCALE GENOMIC DNA]</scope>
    <source>
        <strain>IAI1</strain>
    </source>
</reference>
<organism>
    <name type="scientific">Escherichia coli O8 (strain IAI1)</name>
    <dbReference type="NCBI Taxonomy" id="585034"/>
    <lineage>
        <taxon>Bacteria</taxon>
        <taxon>Pseudomonadati</taxon>
        <taxon>Pseudomonadota</taxon>
        <taxon>Gammaproteobacteria</taxon>
        <taxon>Enterobacterales</taxon>
        <taxon>Enterobacteriaceae</taxon>
        <taxon>Escherichia</taxon>
    </lineage>
</organism>
<gene>
    <name evidence="1" type="primary">aat</name>
    <name type="ordered locus">ECIAI1_0925</name>
</gene>